<feature type="chain" id="PRO_0000203796" description="Protein MAK16 homolog">
    <location>
        <begin position="1"/>
        <end position="303"/>
    </location>
</feature>
<feature type="region of interest" description="Disordered" evidence="2">
    <location>
        <begin position="189"/>
        <end position="303"/>
    </location>
</feature>
<feature type="compositionally biased region" description="Acidic residues" evidence="2">
    <location>
        <begin position="193"/>
        <end position="210"/>
    </location>
</feature>
<feature type="compositionally biased region" description="Acidic residues" evidence="2">
    <location>
        <begin position="218"/>
        <end position="232"/>
    </location>
</feature>
<feature type="compositionally biased region" description="Acidic residues" evidence="2">
    <location>
        <begin position="240"/>
        <end position="262"/>
    </location>
</feature>
<feature type="compositionally biased region" description="Basic residues" evidence="2">
    <location>
        <begin position="266"/>
        <end position="283"/>
    </location>
</feature>
<feature type="sequence conflict" description="In Ref. 1; AAM28207." evidence="4" ref="1">
    <original>C</original>
    <variation>W</variation>
    <location>
        <position position="29"/>
    </location>
</feature>
<accession>Q6NYD4</accession>
<accession>Q8JGS7</accession>
<name>MAK16_DANRE</name>
<organism>
    <name type="scientific">Danio rerio</name>
    <name type="common">Zebrafish</name>
    <name type="synonym">Brachydanio rerio</name>
    <dbReference type="NCBI Taxonomy" id="7955"/>
    <lineage>
        <taxon>Eukaryota</taxon>
        <taxon>Metazoa</taxon>
        <taxon>Chordata</taxon>
        <taxon>Craniata</taxon>
        <taxon>Vertebrata</taxon>
        <taxon>Euteleostomi</taxon>
        <taxon>Actinopterygii</taxon>
        <taxon>Neopterygii</taxon>
        <taxon>Teleostei</taxon>
        <taxon>Ostariophysi</taxon>
        <taxon>Cypriniformes</taxon>
        <taxon>Danionidae</taxon>
        <taxon>Danioninae</taxon>
        <taxon>Danio</taxon>
    </lineage>
</organism>
<dbReference type="EMBL" id="AY099519">
    <property type="protein sequence ID" value="AAM28207.1"/>
    <property type="molecule type" value="mRNA"/>
</dbReference>
<dbReference type="EMBL" id="BC066636">
    <property type="protein sequence ID" value="AAH66636.1"/>
    <property type="molecule type" value="mRNA"/>
</dbReference>
<dbReference type="SMR" id="Q6NYD4"/>
<dbReference type="FunCoup" id="Q6NYD4">
    <property type="interactions" value="2326"/>
</dbReference>
<dbReference type="STRING" id="7955.ENSDARP00000098580"/>
<dbReference type="PaxDb" id="7955-ENSDARP00000098580"/>
<dbReference type="AGR" id="ZFIN:ZDB-GENE-020419-35"/>
<dbReference type="ZFIN" id="ZDB-GENE-020419-35">
    <property type="gene designation" value="mak16"/>
</dbReference>
<dbReference type="eggNOG" id="KOG3064">
    <property type="taxonomic scope" value="Eukaryota"/>
</dbReference>
<dbReference type="InParanoid" id="Q6NYD4"/>
<dbReference type="PhylomeDB" id="Q6NYD4"/>
<dbReference type="PRO" id="PR:Q6NYD4"/>
<dbReference type="Proteomes" id="UP000000437">
    <property type="component" value="Unplaced"/>
</dbReference>
<dbReference type="GO" id="GO:0005730">
    <property type="term" value="C:nucleolus"/>
    <property type="evidence" value="ECO:0000318"/>
    <property type="project" value="GO_Central"/>
</dbReference>
<dbReference type="GO" id="GO:0030687">
    <property type="term" value="C:preribosome, large subunit precursor"/>
    <property type="evidence" value="ECO:0000318"/>
    <property type="project" value="GO_Central"/>
</dbReference>
<dbReference type="GO" id="GO:0000460">
    <property type="term" value="P:maturation of 5.8S rRNA"/>
    <property type="evidence" value="ECO:0000318"/>
    <property type="project" value="GO_Central"/>
</dbReference>
<dbReference type="GO" id="GO:0000470">
    <property type="term" value="P:maturation of LSU-rRNA"/>
    <property type="evidence" value="ECO:0000318"/>
    <property type="project" value="GO_Central"/>
</dbReference>
<dbReference type="FunFam" id="3.30.390.110:FF:000003">
    <property type="entry name" value="Protein MAK16 homolog"/>
    <property type="match status" value="1"/>
</dbReference>
<dbReference type="Gene3D" id="3.30.390.110">
    <property type="match status" value="1"/>
</dbReference>
<dbReference type="InterPro" id="IPR006958">
    <property type="entry name" value="Mak16"/>
</dbReference>
<dbReference type="InterPro" id="IPR029004">
    <property type="entry name" value="Ribosomal_eL28/Mak16"/>
</dbReference>
<dbReference type="PANTHER" id="PTHR23405">
    <property type="entry name" value="MAINTENANCE OF KILLER 16 MAK16 PROTEIN-RELATED"/>
    <property type="match status" value="1"/>
</dbReference>
<dbReference type="PANTHER" id="PTHR23405:SF4">
    <property type="entry name" value="PROTEIN MAK16 HOMOLOG"/>
    <property type="match status" value="1"/>
</dbReference>
<dbReference type="Pfam" id="PF04874">
    <property type="entry name" value="Mak16"/>
    <property type="match status" value="1"/>
</dbReference>
<dbReference type="Pfam" id="PF01778">
    <property type="entry name" value="Ribosomal_L28e"/>
    <property type="match status" value="1"/>
</dbReference>
<dbReference type="PIRSF" id="PIRSF003352">
    <property type="entry name" value="MAK16"/>
    <property type="match status" value="1"/>
</dbReference>
<keyword id="KW-0217">Developmental protein</keyword>
<keyword id="KW-0539">Nucleus</keyword>
<keyword id="KW-1185">Reference proteome</keyword>
<reference key="1">
    <citation type="journal article" date="2002" name="Nat. Genet.">
        <title>Insertional mutagenesis in zebrafish rapidly identifies genes essential for early vertebrate development.</title>
        <authorList>
            <person name="Golling G."/>
            <person name="Amsterdam A."/>
            <person name="Sun Z."/>
            <person name="Antonelli M."/>
            <person name="Maldonado E."/>
            <person name="Chen W."/>
            <person name="Burgess S."/>
            <person name="Haldi M."/>
            <person name="Artzt K."/>
            <person name="Farrington S."/>
            <person name="Lin S.-Y."/>
            <person name="Nissen R.M."/>
            <person name="Hopkins N."/>
        </authorList>
    </citation>
    <scope>NUCLEOTIDE SEQUENCE [LARGE SCALE MRNA]</scope>
    <scope>FUNCTION</scope>
    <scope>DISRUPTION PHENOTYPE</scope>
    <source>
        <tissue>Embryo</tissue>
    </source>
</reference>
<reference key="2">
    <citation type="submission" date="2004-02" db="EMBL/GenBank/DDBJ databases">
        <authorList>
            <consortium name="NIH - Zebrafish Gene Collection (ZGC) project"/>
        </authorList>
    </citation>
    <scope>NUCLEOTIDE SEQUENCE [LARGE SCALE MRNA]</scope>
    <source>
        <tissue>Kidney</tissue>
    </source>
</reference>
<comment type="function">
    <text evidence="3">Plays an essential role in early embryonic development.</text>
</comment>
<comment type="subcellular location">
    <subcellularLocation>
        <location evidence="1">Nucleus</location>
        <location evidence="1">Nucleolus</location>
    </subcellularLocation>
</comment>
<comment type="disruption phenotype">
    <text evidence="3">Embryos show various defects including CNS necrosis, a thin yolk sac extension and small head and eyes.</text>
</comment>
<comment type="similarity">
    <text evidence="4">Belongs to the MAK16 family.</text>
</comment>
<gene>
    <name type="primary">mak16</name>
    <name type="synonym">mak16l</name>
    <name type="synonym">rbm13</name>
</gene>
<evidence type="ECO:0000250" key="1"/>
<evidence type="ECO:0000256" key="2">
    <source>
        <dbReference type="SAM" id="MobiDB-lite"/>
    </source>
</evidence>
<evidence type="ECO:0000269" key="3">
    <source>
    </source>
</evidence>
<evidence type="ECO:0000305" key="4"/>
<protein>
    <recommendedName>
        <fullName>Protein MAK16 homolog</fullName>
    </recommendedName>
    <alternativeName>
        <fullName>MAK16-like protein</fullName>
    </alternativeName>
    <alternativeName>
        <fullName>Protein RBM13</fullName>
    </alternativeName>
</protein>
<proteinExistence type="evidence at transcript level"/>
<sequence length="303" mass="35864">MQHDDVIWDLIGNKSFCSYKVKTKTQQFCRNEYNITGLCNRSSCPLANSQYATIREEKGQCFLYMKVIERAAFPSRMWEKVKLDRNYAKALEQIDENLIYWPRFIRHKCKQRLTKITQYLIRIRKLTLKRQRKLVPLSRKVERREKRREEKALIAAQLENAIEKELLDRLKQGTYGDIYNFPINAFDKAMEKQDEESESEEEEEEEDEEESGTREFIAEDEFEESDLSDFEELNNLKDSSDEEVNDEEESSEESEEESEEEEVKSKAKSKGKAPLKGPSRKKRAYVEIEYEQETEPAQKSKAT</sequence>